<reference key="1">
    <citation type="submission" date="2007-07" db="EMBL/GenBank/DDBJ databases">
        <title>Complete sequence of chromosome of Shewanella baltica OS185.</title>
        <authorList>
            <consortium name="US DOE Joint Genome Institute"/>
            <person name="Copeland A."/>
            <person name="Lucas S."/>
            <person name="Lapidus A."/>
            <person name="Barry K."/>
            <person name="Glavina del Rio T."/>
            <person name="Dalin E."/>
            <person name="Tice H."/>
            <person name="Pitluck S."/>
            <person name="Sims D."/>
            <person name="Brettin T."/>
            <person name="Bruce D."/>
            <person name="Detter J.C."/>
            <person name="Han C."/>
            <person name="Schmutz J."/>
            <person name="Larimer F."/>
            <person name="Land M."/>
            <person name="Hauser L."/>
            <person name="Kyrpides N."/>
            <person name="Mikhailova N."/>
            <person name="Brettar I."/>
            <person name="Rodrigues J."/>
            <person name="Konstantinidis K."/>
            <person name="Tiedje J."/>
            <person name="Richardson P."/>
        </authorList>
    </citation>
    <scope>NUCLEOTIDE SEQUENCE [LARGE SCALE GENOMIC DNA]</scope>
    <source>
        <strain>OS185</strain>
    </source>
</reference>
<sequence>MFGKLLTKVFGSRNDRTLKGLQKIVISINALEADYEKLTDEALKAKTAEFRERLAAGASLDSIMAEAFATVREASKRVFDMRHFDVQLLGGMVLDSNRIAEMRTGEGKTLTATLPAYLNALTGKGVHVITVNDYLARRDAENNRPLFEFLGLTVGINVAGLGQHEKKAAYNADITYGTNNEFGFDYLRDNMAFSPQERVQRPLHYALIDEVDSILIDEARTPLIISGAAEDSSELYIKINTLIPNLIRQDKEDTEEYVGEGDYSIDEKAKQVHFTERGQEKVENLLIERGMLAEGDSLYSAANISLLHHVNAALRAHTLFERDVDYIVQDNEVIIVDEHTGRTMPGRRWSEGLHQAVEAKEGVHIQNENQTLASITFQNYFRQYEKLAGMTGTADTEAFEFQHIYGLDTVVVPTNRPMVRKDMADLVYLTADEKYQAIIKDIKDCRERGQPVLVGTVSIEQSELLARLMVQEKIPHEVLNAKFHEREAEIVAQAGRTGSVTIATNMAGRGTDIVLGGNWNMEIDELDNPTAEQKAKIKADWQIRHDEVVAAGGLHILGTERHESRRIDNQLRGRAGRQGDAGSSRFYLSMEDSLMRIFASDRVSGMMKKLGMEEGEAIEHPWVSRAIENAQRKVEARNFDIRKQLLEFDDVANDQRQVVYAQRNELMDAESIEDTIQNIQDDVIGAVIDQYIPPQSVEELWDIPGLEQRLHQEFMLKLPIQEWLDKEDDLHEESLRERIITAWGDAYKAKEEMVGAQVLRQFEKAVMLQTLDGLWKEHLAAMDHLRQGIHLRGYAQKNPKQEYKRESFELFQQLLNTLKHDVISVLSKVQVQAQSDVEEMEARRREEDAKIQRDYQHAAAESLVGGGDEHEAVTAQAPMIRDGEKVGRNDPCPCGSGRKYKQCHGKLS</sequence>
<comment type="function">
    <text evidence="1">Part of the Sec protein translocase complex. Interacts with the SecYEG preprotein conducting channel. Has a central role in coupling the hydrolysis of ATP to the transfer of proteins into and across the cell membrane, serving both as a receptor for the preprotein-SecB complex and as an ATP-driven molecular motor driving the stepwise translocation of polypeptide chains across the membrane.</text>
</comment>
<comment type="catalytic activity">
    <reaction evidence="1">
        <text>ATP + H2O + cellular proteinSide 1 = ADP + phosphate + cellular proteinSide 2.</text>
        <dbReference type="EC" id="7.4.2.8"/>
    </reaction>
</comment>
<comment type="cofactor">
    <cofactor evidence="1">
        <name>Zn(2+)</name>
        <dbReference type="ChEBI" id="CHEBI:29105"/>
    </cofactor>
    <text evidence="1">May bind 1 zinc ion per subunit.</text>
</comment>
<comment type="subunit">
    <text evidence="1">Monomer and homodimer. Part of the essential Sec protein translocation apparatus which comprises SecA, SecYEG and auxiliary proteins SecDF-YajC and YidC.</text>
</comment>
<comment type="subcellular location">
    <subcellularLocation>
        <location evidence="1">Cell inner membrane</location>
        <topology evidence="1">Peripheral membrane protein</topology>
        <orientation evidence="1">Cytoplasmic side</orientation>
    </subcellularLocation>
    <subcellularLocation>
        <location evidence="1">Cytoplasm</location>
    </subcellularLocation>
    <text evidence="1">Distribution is 50-50.</text>
</comment>
<comment type="similarity">
    <text evidence="1">Belongs to the SecA family.</text>
</comment>
<accession>A6WID9</accession>
<gene>
    <name evidence="1" type="primary">secA</name>
    <name type="ordered locus">Shew185_0409</name>
</gene>
<feature type="chain" id="PRO_0000320991" description="Protein translocase subunit SecA">
    <location>
        <begin position="1"/>
        <end position="908"/>
    </location>
</feature>
<feature type="region of interest" description="Disordered" evidence="2">
    <location>
        <begin position="876"/>
        <end position="908"/>
    </location>
</feature>
<feature type="compositionally biased region" description="Basic residues" evidence="2">
    <location>
        <begin position="898"/>
        <end position="908"/>
    </location>
</feature>
<feature type="binding site" evidence="1">
    <location>
        <position position="87"/>
    </location>
    <ligand>
        <name>ATP</name>
        <dbReference type="ChEBI" id="CHEBI:30616"/>
    </ligand>
</feature>
<feature type="binding site" evidence="1">
    <location>
        <begin position="105"/>
        <end position="109"/>
    </location>
    <ligand>
        <name>ATP</name>
        <dbReference type="ChEBI" id="CHEBI:30616"/>
    </ligand>
</feature>
<feature type="binding site" evidence="1">
    <location>
        <position position="512"/>
    </location>
    <ligand>
        <name>ATP</name>
        <dbReference type="ChEBI" id="CHEBI:30616"/>
    </ligand>
</feature>
<feature type="binding site" evidence="1">
    <location>
        <position position="892"/>
    </location>
    <ligand>
        <name>Zn(2+)</name>
        <dbReference type="ChEBI" id="CHEBI:29105"/>
    </ligand>
</feature>
<feature type="binding site" evidence="1">
    <location>
        <position position="894"/>
    </location>
    <ligand>
        <name>Zn(2+)</name>
        <dbReference type="ChEBI" id="CHEBI:29105"/>
    </ligand>
</feature>
<feature type="binding site" evidence="1">
    <location>
        <position position="903"/>
    </location>
    <ligand>
        <name>Zn(2+)</name>
        <dbReference type="ChEBI" id="CHEBI:29105"/>
    </ligand>
</feature>
<feature type="binding site" evidence="1">
    <location>
        <position position="904"/>
    </location>
    <ligand>
        <name>Zn(2+)</name>
        <dbReference type="ChEBI" id="CHEBI:29105"/>
    </ligand>
</feature>
<evidence type="ECO:0000255" key="1">
    <source>
        <dbReference type="HAMAP-Rule" id="MF_01382"/>
    </source>
</evidence>
<evidence type="ECO:0000256" key="2">
    <source>
        <dbReference type="SAM" id="MobiDB-lite"/>
    </source>
</evidence>
<keyword id="KW-0067">ATP-binding</keyword>
<keyword id="KW-0997">Cell inner membrane</keyword>
<keyword id="KW-1003">Cell membrane</keyword>
<keyword id="KW-0963">Cytoplasm</keyword>
<keyword id="KW-0472">Membrane</keyword>
<keyword id="KW-0479">Metal-binding</keyword>
<keyword id="KW-0547">Nucleotide-binding</keyword>
<keyword id="KW-0653">Protein transport</keyword>
<keyword id="KW-1278">Translocase</keyword>
<keyword id="KW-0811">Translocation</keyword>
<keyword id="KW-0813">Transport</keyword>
<keyword id="KW-0862">Zinc</keyword>
<proteinExistence type="inferred from homology"/>
<name>SECA_SHEB8</name>
<protein>
    <recommendedName>
        <fullName evidence="1">Protein translocase subunit SecA</fullName>
        <ecNumber evidence="1">7.4.2.8</ecNumber>
    </recommendedName>
</protein>
<organism>
    <name type="scientific">Shewanella baltica (strain OS185)</name>
    <dbReference type="NCBI Taxonomy" id="402882"/>
    <lineage>
        <taxon>Bacteria</taxon>
        <taxon>Pseudomonadati</taxon>
        <taxon>Pseudomonadota</taxon>
        <taxon>Gammaproteobacteria</taxon>
        <taxon>Alteromonadales</taxon>
        <taxon>Shewanellaceae</taxon>
        <taxon>Shewanella</taxon>
    </lineage>
</organism>
<dbReference type="EC" id="7.4.2.8" evidence="1"/>
<dbReference type="EMBL" id="CP000753">
    <property type="protein sequence ID" value="ABS06578.1"/>
    <property type="molecule type" value="Genomic_DNA"/>
</dbReference>
<dbReference type="RefSeq" id="WP_011982229.1">
    <property type="nucleotide sequence ID" value="NC_009665.1"/>
</dbReference>
<dbReference type="SMR" id="A6WID9"/>
<dbReference type="GeneID" id="11770756"/>
<dbReference type="KEGG" id="sbm:Shew185_0409"/>
<dbReference type="HOGENOM" id="CLU_005314_3_0_6"/>
<dbReference type="GO" id="GO:0031522">
    <property type="term" value="C:cell envelope Sec protein transport complex"/>
    <property type="evidence" value="ECO:0007669"/>
    <property type="project" value="TreeGrafter"/>
</dbReference>
<dbReference type="GO" id="GO:0005829">
    <property type="term" value="C:cytosol"/>
    <property type="evidence" value="ECO:0007669"/>
    <property type="project" value="TreeGrafter"/>
</dbReference>
<dbReference type="GO" id="GO:0005886">
    <property type="term" value="C:plasma membrane"/>
    <property type="evidence" value="ECO:0007669"/>
    <property type="project" value="UniProtKB-SubCell"/>
</dbReference>
<dbReference type="GO" id="GO:0005524">
    <property type="term" value="F:ATP binding"/>
    <property type="evidence" value="ECO:0007669"/>
    <property type="project" value="UniProtKB-UniRule"/>
</dbReference>
<dbReference type="GO" id="GO:0046872">
    <property type="term" value="F:metal ion binding"/>
    <property type="evidence" value="ECO:0007669"/>
    <property type="project" value="UniProtKB-KW"/>
</dbReference>
<dbReference type="GO" id="GO:0008564">
    <property type="term" value="F:protein-exporting ATPase activity"/>
    <property type="evidence" value="ECO:0007669"/>
    <property type="project" value="UniProtKB-EC"/>
</dbReference>
<dbReference type="GO" id="GO:0065002">
    <property type="term" value="P:intracellular protein transmembrane transport"/>
    <property type="evidence" value="ECO:0007669"/>
    <property type="project" value="UniProtKB-UniRule"/>
</dbReference>
<dbReference type="GO" id="GO:0017038">
    <property type="term" value="P:protein import"/>
    <property type="evidence" value="ECO:0007669"/>
    <property type="project" value="InterPro"/>
</dbReference>
<dbReference type="GO" id="GO:0006605">
    <property type="term" value="P:protein targeting"/>
    <property type="evidence" value="ECO:0007669"/>
    <property type="project" value="UniProtKB-UniRule"/>
</dbReference>
<dbReference type="GO" id="GO:0043952">
    <property type="term" value="P:protein transport by the Sec complex"/>
    <property type="evidence" value="ECO:0007669"/>
    <property type="project" value="TreeGrafter"/>
</dbReference>
<dbReference type="CDD" id="cd17928">
    <property type="entry name" value="DEXDc_SecA"/>
    <property type="match status" value="1"/>
</dbReference>
<dbReference type="CDD" id="cd18803">
    <property type="entry name" value="SF2_C_secA"/>
    <property type="match status" value="1"/>
</dbReference>
<dbReference type="FunFam" id="1.10.3060.10:FF:000001">
    <property type="entry name" value="Preprotein translocase subunit SecA"/>
    <property type="match status" value="1"/>
</dbReference>
<dbReference type="FunFam" id="3.40.50.300:FF:000081">
    <property type="entry name" value="Preprotein translocase subunit SecA"/>
    <property type="match status" value="1"/>
</dbReference>
<dbReference type="FunFam" id="3.40.50.300:FF:000113">
    <property type="entry name" value="Preprotein translocase subunit SecA"/>
    <property type="match status" value="1"/>
</dbReference>
<dbReference type="FunFam" id="3.90.1440.10:FF:000001">
    <property type="entry name" value="Preprotein translocase subunit SecA"/>
    <property type="match status" value="1"/>
</dbReference>
<dbReference type="Gene3D" id="1.10.3060.10">
    <property type="entry name" value="Helical scaffold and wing domains of SecA"/>
    <property type="match status" value="1"/>
</dbReference>
<dbReference type="Gene3D" id="3.40.50.300">
    <property type="entry name" value="P-loop containing nucleotide triphosphate hydrolases"/>
    <property type="match status" value="2"/>
</dbReference>
<dbReference type="Gene3D" id="3.90.1440.10">
    <property type="entry name" value="SecA, preprotein cross-linking domain"/>
    <property type="match status" value="1"/>
</dbReference>
<dbReference type="HAMAP" id="MF_01382">
    <property type="entry name" value="SecA"/>
    <property type="match status" value="1"/>
</dbReference>
<dbReference type="InterPro" id="IPR014001">
    <property type="entry name" value="Helicase_ATP-bd"/>
</dbReference>
<dbReference type="InterPro" id="IPR001650">
    <property type="entry name" value="Helicase_C-like"/>
</dbReference>
<dbReference type="InterPro" id="IPR027417">
    <property type="entry name" value="P-loop_NTPase"/>
</dbReference>
<dbReference type="InterPro" id="IPR004027">
    <property type="entry name" value="SEC_C_motif"/>
</dbReference>
<dbReference type="InterPro" id="IPR000185">
    <property type="entry name" value="SecA"/>
</dbReference>
<dbReference type="InterPro" id="IPR020937">
    <property type="entry name" value="SecA_CS"/>
</dbReference>
<dbReference type="InterPro" id="IPR011115">
    <property type="entry name" value="SecA_DEAD"/>
</dbReference>
<dbReference type="InterPro" id="IPR014018">
    <property type="entry name" value="SecA_motor_DEAD"/>
</dbReference>
<dbReference type="InterPro" id="IPR011130">
    <property type="entry name" value="SecA_preprotein_X-link_dom"/>
</dbReference>
<dbReference type="InterPro" id="IPR044722">
    <property type="entry name" value="SecA_SF2_C"/>
</dbReference>
<dbReference type="InterPro" id="IPR011116">
    <property type="entry name" value="SecA_Wing/Scaffold"/>
</dbReference>
<dbReference type="InterPro" id="IPR036266">
    <property type="entry name" value="SecA_Wing/Scaffold_sf"/>
</dbReference>
<dbReference type="InterPro" id="IPR036670">
    <property type="entry name" value="SecA_X-link_sf"/>
</dbReference>
<dbReference type="NCBIfam" id="NF009538">
    <property type="entry name" value="PRK12904.1"/>
    <property type="match status" value="1"/>
</dbReference>
<dbReference type="NCBIfam" id="TIGR00963">
    <property type="entry name" value="secA"/>
    <property type="match status" value="1"/>
</dbReference>
<dbReference type="PANTHER" id="PTHR30612:SF0">
    <property type="entry name" value="CHLOROPLAST PROTEIN-TRANSPORTING ATPASE"/>
    <property type="match status" value="1"/>
</dbReference>
<dbReference type="PANTHER" id="PTHR30612">
    <property type="entry name" value="SECA INNER MEMBRANE COMPONENT OF SEC PROTEIN SECRETION SYSTEM"/>
    <property type="match status" value="1"/>
</dbReference>
<dbReference type="Pfam" id="PF21090">
    <property type="entry name" value="P-loop_SecA"/>
    <property type="match status" value="1"/>
</dbReference>
<dbReference type="Pfam" id="PF02810">
    <property type="entry name" value="SEC-C"/>
    <property type="match status" value="1"/>
</dbReference>
<dbReference type="Pfam" id="PF07517">
    <property type="entry name" value="SecA_DEAD"/>
    <property type="match status" value="1"/>
</dbReference>
<dbReference type="Pfam" id="PF01043">
    <property type="entry name" value="SecA_PP_bind"/>
    <property type="match status" value="1"/>
</dbReference>
<dbReference type="Pfam" id="PF07516">
    <property type="entry name" value="SecA_SW"/>
    <property type="match status" value="1"/>
</dbReference>
<dbReference type="PRINTS" id="PR00906">
    <property type="entry name" value="SECA"/>
</dbReference>
<dbReference type="SMART" id="SM00957">
    <property type="entry name" value="SecA_DEAD"/>
    <property type="match status" value="1"/>
</dbReference>
<dbReference type="SMART" id="SM00958">
    <property type="entry name" value="SecA_PP_bind"/>
    <property type="match status" value="1"/>
</dbReference>
<dbReference type="SUPFAM" id="SSF81886">
    <property type="entry name" value="Helical scaffold and wing domains of SecA"/>
    <property type="match status" value="1"/>
</dbReference>
<dbReference type="SUPFAM" id="SSF52540">
    <property type="entry name" value="P-loop containing nucleoside triphosphate hydrolases"/>
    <property type="match status" value="2"/>
</dbReference>
<dbReference type="SUPFAM" id="SSF81767">
    <property type="entry name" value="Pre-protein crosslinking domain of SecA"/>
    <property type="match status" value="1"/>
</dbReference>
<dbReference type="PROSITE" id="PS01312">
    <property type="entry name" value="SECA"/>
    <property type="match status" value="1"/>
</dbReference>
<dbReference type="PROSITE" id="PS51196">
    <property type="entry name" value="SECA_MOTOR_DEAD"/>
    <property type="match status" value="1"/>
</dbReference>